<evidence type="ECO:0000250" key="1">
    <source>
        <dbReference type="UniProtKB" id="P63142"/>
    </source>
</evidence>
<evidence type="ECO:0000250" key="2">
    <source>
        <dbReference type="UniProtKB" id="Q09470"/>
    </source>
</evidence>
<evidence type="ECO:0000250" key="3">
    <source>
        <dbReference type="UniProtKB" id="Q16322"/>
    </source>
</evidence>
<evidence type="ECO:0000255" key="4"/>
<evidence type="ECO:0000256" key="5">
    <source>
        <dbReference type="SAM" id="MobiDB-lite"/>
    </source>
</evidence>
<evidence type="ECO:0000269" key="6">
    <source>
    </source>
</evidence>
<evidence type="ECO:0000269" key="7">
    <source>
    </source>
</evidence>
<evidence type="ECO:0000305" key="8"/>
<evidence type="ECO:0000312" key="9">
    <source>
        <dbReference type="EMBL" id="AAI37829.1"/>
    </source>
</evidence>
<evidence type="ECO:0000312" key="10">
    <source>
        <dbReference type="MGI" id="MGI:3037820"/>
    </source>
</evidence>
<evidence type="ECO:0000312" key="11">
    <source>
        <dbReference type="Proteomes" id="UP000000589"/>
    </source>
</evidence>
<proteinExistence type="evidence at transcript level"/>
<gene>
    <name evidence="10" type="primary">Kcna10</name>
</gene>
<reference evidence="11" key="1">
    <citation type="journal article" date="2009" name="PLoS Biol.">
        <title>Lineage-specific biology revealed by a finished genome assembly of the mouse.</title>
        <authorList>
            <person name="Church D.M."/>
            <person name="Goodstadt L."/>
            <person name="Hillier L.W."/>
            <person name="Zody M.C."/>
            <person name="Goldstein S."/>
            <person name="She X."/>
            <person name="Bult C.J."/>
            <person name="Agarwala R."/>
            <person name="Cherry J.L."/>
            <person name="DiCuccio M."/>
            <person name="Hlavina W."/>
            <person name="Kapustin Y."/>
            <person name="Meric P."/>
            <person name="Maglott D."/>
            <person name="Birtle Z."/>
            <person name="Marques A.C."/>
            <person name="Graves T."/>
            <person name="Zhou S."/>
            <person name="Teague B."/>
            <person name="Potamousis K."/>
            <person name="Churas C."/>
            <person name="Place M."/>
            <person name="Herschleb J."/>
            <person name="Runnheim R."/>
            <person name="Forrest D."/>
            <person name="Amos-Landgraf J."/>
            <person name="Schwartz D.C."/>
            <person name="Cheng Z."/>
            <person name="Lindblad-Toh K."/>
            <person name="Eichler E.E."/>
            <person name="Ponting C.P."/>
        </authorList>
    </citation>
    <scope>NUCLEOTIDE SEQUENCE [LARGE SCALE GENOMIC DNA]</scope>
    <source>
        <strain evidence="11">C57BL/6J</strain>
    </source>
</reference>
<reference evidence="9" key="2">
    <citation type="journal article" date="2004" name="Genome Res.">
        <title>The status, quality, and expansion of the NIH full-length cDNA project: the Mammalian Gene Collection (MGC).</title>
        <authorList>
            <consortium name="The MGC Project Team"/>
        </authorList>
    </citation>
    <scope>NUCLEOTIDE SEQUENCE [LARGE SCALE MRNA]</scope>
    <source>
        <tissue evidence="9">Brain</tissue>
    </source>
</reference>
<reference evidence="8" key="3">
    <citation type="journal article" date="2012" name="Gene Expr. Patterns">
        <title>Specific expression of Kcna10, Pxn and Odf2 in the organ of Corti.</title>
        <authorList>
            <person name="Carlisle F.A."/>
            <person name="Steel K.P."/>
            <person name="Lewis M.A."/>
        </authorList>
    </citation>
    <scope>DEVELOPMENTAL STAGE</scope>
</reference>
<reference evidence="8" key="4">
    <citation type="journal article" date="2013" name="Hear. Res.">
        <title>A null mutation of mouse Kcna10 causes significant vestibular and mild hearing dysfunction.</title>
        <authorList>
            <person name="Lee S.I."/>
            <person name="Conrad T."/>
            <person name="Jones S.M."/>
            <person name="Lagziel A."/>
            <person name="Starost M.F."/>
            <person name="Belyantseva I.A."/>
            <person name="Friedman T.B."/>
            <person name="Morell R.J."/>
        </authorList>
    </citation>
    <scope>TISSUE SPECIFICITY</scope>
    <scope>DEVELOPMENTAL STAGE</scope>
    <scope>DISRUPTION PHENOTYPE</scope>
</reference>
<dbReference type="EMBL" id="AC121825">
    <property type="status" value="NOT_ANNOTATED_CDS"/>
    <property type="molecule type" value="Genomic_DNA"/>
</dbReference>
<dbReference type="EMBL" id="AC132405">
    <property type="status" value="NOT_ANNOTATED_CDS"/>
    <property type="molecule type" value="Genomic_DNA"/>
</dbReference>
<dbReference type="EMBL" id="BC137828">
    <property type="protein sequence ID" value="AAI37829.1"/>
    <property type="molecule type" value="mRNA"/>
</dbReference>
<dbReference type="EMBL" id="BC137829">
    <property type="protein sequence ID" value="AAI37830.1"/>
    <property type="molecule type" value="mRNA"/>
</dbReference>
<dbReference type="EMBL" id="BC158036">
    <property type="protein sequence ID" value="AAI58037.1"/>
    <property type="molecule type" value="mRNA"/>
</dbReference>
<dbReference type="CCDS" id="CCDS38587.1"/>
<dbReference type="RefSeq" id="NP_001074609.1">
    <property type="nucleotide sequence ID" value="NM_001081140.1"/>
</dbReference>
<dbReference type="SMR" id="B2RQA1"/>
<dbReference type="FunCoup" id="B2RQA1">
    <property type="interactions" value="30"/>
</dbReference>
<dbReference type="STRING" id="10090.ENSMUSP00000088118"/>
<dbReference type="PhosphoSitePlus" id="B2RQA1"/>
<dbReference type="PaxDb" id="10090-ENSMUSP00000088118"/>
<dbReference type="PeptideAtlas" id="B2RQA1"/>
<dbReference type="ProteomicsDB" id="269244"/>
<dbReference type="Antibodypedia" id="20099">
    <property type="antibodies" value="88 antibodies from 22 providers"/>
</dbReference>
<dbReference type="DNASU" id="242151"/>
<dbReference type="Ensembl" id="ENSMUST00000055064.8">
    <property type="protein sequence ID" value="ENSMUSP00000088118.6"/>
    <property type="gene ID" value="ENSMUSG00000042861.8"/>
</dbReference>
<dbReference type="GeneID" id="242151"/>
<dbReference type="KEGG" id="mmu:242151"/>
<dbReference type="UCSC" id="uc008qwt.1">
    <property type="organism name" value="mouse"/>
</dbReference>
<dbReference type="AGR" id="MGI:3037820"/>
<dbReference type="CTD" id="3744"/>
<dbReference type="MGI" id="MGI:3037820">
    <property type="gene designation" value="Kcna10"/>
</dbReference>
<dbReference type="VEuPathDB" id="HostDB:ENSMUSG00000042861"/>
<dbReference type="eggNOG" id="KOG1545">
    <property type="taxonomic scope" value="Eukaryota"/>
</dbReference>
<dbReference type="GeneTree" id="ENSGT00940000159534"/>
<dbReference type="HOGENOM" id="CLU_011722_4_0_1"/>
<dbReference type="InParanoid" id="B2RQA1"/>
<dbReference type="OMA" id="NWRILIS"/>
<dbReference type="OrthoDB" id="415460at2759"/>
<dbReference type="PhylomeDB" id="B2RQA1"/>
<dbReference type="TreeFam" id="TF313103"/>
<dbReference type="Reactome" id="R-MMU-1296072">
    <property type="pathway name" value="Voltage gated Potassium channels"/>
</dbReference>
<dbReference type="BioGRID-ORCS" id="242151">
    <property type="hits" value="3 hits in 77 CRISPR screens"/>
</dbReference>
<dbReference type="PRO" id="PR:B2RQA1"/>
<dbReference type="Proteomes" id="UP000000589">
    <property type="component" value="Chromosome 3"/>
</dbReference>
<dbReference type="RNAct" id="B2RQA1">
    <property type="molecule type" value="protein"/>
</dbReference>
<dbReference type="Bgee" id="ENSMUSG00000042861">
    <property type="expression patterns" value="Expressed in mesodermal cell in embryo and 5 other cell types or tissues"/>
</dbReference>
<dbReference type="GO" id="GO:0005886">
    <property type="term" value="C:plasma membrane"/>
    <property type="evidence" value="ECO:0000266"/>
    <property type="project" value="MGI"/>
</dbReference>
<dbReference type="GO" id="GO:0008076">
    <property type="term" value="C:voltage-gated potassium channel complex"/>
    <property type="evidence" value="ECO:0007669"/>
    <property type="project" value="InterPro"/>
</dbReference>
<dbReference type="GO" id="GO:0005249">
    <property type="term" value="F:voltage-gated potassium channel activity"/>
    <property type="evidence" value="ECO:0000266"/>
    <property type="project" value="MGI"/>
</dbReference>
<dbReference type="GO" id="GO:0006813">
    <property type="term" value="P:potassium ion transport"/>
    <property type="evidence" value="ECO:0000266"/>
    <property type="project" value="MGI"/>
</dbReference>
<dbReference type="GO" id="GO:0051260">
    <property type="term" value="P:protein homooligomerization"/>
    <property type="evidence" value="ECO:0007669"/>
    <property type="project" value="InterPro"/>
</dbReference>
<dbReference type="FunFam" id="1.10.287.70:FF:000002">
    <property type="entry name" value="Potassium voltage-gated channel subfamily a member"/>
    <property type="match status" value="1"/>
</dbReference>
<dbReference type="FunFam" id="3.30.710.10:FF:000012">
    <property type="entry name" value="Potassium voltage-gated channel subfamily A member 10"/>
    <property type="match status" value="1"/>
</dbReference>
<dbReference type="FunFam" id="1.20.120.350:FF:000033">
    <property type="entry name" value="potassium voltage-gated channel subfamily A member 10"/>
    <property type="match status" value="1"/>
</dbReference>
<dbReference type="Gene3D" id="1.10.287.70">
    <property type="match status" value="1"/>
</dbReference>
<dbReference type="Gene3D" id="3.30.710.10">
    <property type="entry name" value="Potassium Channel Kv1.1, Chain A"/>
    <property type="match status" value="1"/>
</dbReference>
<dbReference type="Gene3D" id="1.20.120.350">
    <property type="entry name" value="Voltage-gated potassium channels. Chain C"/>
    <property type="match status" value="1"/>
</dbReference>
<dbReference type="InterPro" id="IPR000210">
    <property type="entry name" value="BTB/POZ_dom"/>
</dbReference>
<dbReference type="InterPro" id="IPR005821">
    <property type="entry name" value="Ion_trans_dom"/>
</dbReference>
<dbReference type="InterPro" id="IPR003968">
    <property type="entry name" value="K_chnl_volt-dep_Kv"/>
</dbReference>
<dbReference type="InterPro" id="IPR003972">
    <property type="entry name" value="K_chnl_volt-dep_Kv1"/>
</dbReference>
<dbReference type="InterPro" id="IPR011333">
    <property type="entry name" value="SKP1/BTB/POZ_sf"/>
</dbReference>
<dbReference type="InterPro" id="IPR003131">
    <property type="entry name" value="T1-type_BTB"/>
</dbReference>
<dbReference type="InterPro" id="IPR028325">
    <property type="entry name" value="VG_K_chnl"/>
</dbReference>
<dbReference type="InterPro" id="IPR027359">
    <property type="entry name" value="Volt_channel_dom_sf"/>
</dbReference>
<dbReference type="PANTHER" id="PTHR11537:SF44">
    <property type="entry name" value="POTASSIUM VOLTAGE-GATED CHANNEL SUBFAMILY A MEMBER 10"/>
    <property type="match status" value="1"/>
</dbReference>
<dbReference type="PANTHER" id="PTHR11537">
    <property type="entry name" value="VOLTAGE-GATED POTASSIUM CHANNEL"/>
    <property type="match status" value="1"/>
</dbReference>
<dbReference type="Pfam" id="PF02214">
    <property type="entry name" value="BTB_2"/>
    <property type="match status" value="1"/>
</dbReference>
<dbReference type="Pfam" id="PF00520">
    <property type="entry name" value="Ion_trans"/>
    <property type="match status" value="1"/>
</dbReference>
<dbReference type="PRINTS" id="PR00169">
    <property type="entry name" value="KCHANNEL"/>
</dbReference>
<dbReference type="PRINTS" id="PR01491">
    <property type="entry name" value="KVCHANNEL"/>
</dbReference>
<dbReference type="PRINTS" id="PR01496">
    <property type="entry name" value="SHAKERCHANEL"/>
</dbReference>
<dbReference type="SMART" id="SM00225">
    <property type="entry name" value="BTB"/>
    <property type="match status" value="1"/>
</dbReference>
<dbReference type="SUPFAM" id="SSF54695">
    <property type="entry name" value="POZ domain"/>
    <property type="match status" value="1"/>
</dbReference>
<dbReference type="SUPFAM" id="SSF81324">
    <property type="entry name" value="Voltage-gated potassium channels"/>
    <property type="match status" value="1"/>
</dbReference>
<protein>
    <recommendedName>
        <fullName evidence="8">Potassium voltage-gated channel subfamily A member 10</fullName>
    </recommendedName>
    <alternativeName>
        <fullName evidence="3">Voltage-gated potassium channel subunit Kv1.8</fullName>
    </alternativeName>
</protein>
<sequence length="511" mass="57968">MDVCSWKEMEVALVNFDNSDEIHEEPGYATDFDPTSSKGRPGSSPFSNWRVLISDNTNHETAFSKIPGEYVDPPGPEPVVLNEGNQRVIINIAGLRFETQLRTLNQFPETLLGDREKRMQFFDSMRNEYFFDRNRPSFDGILYYYQSGGKIRRPANVPIDVFADEISFYELGSEAMDQFREDEGFIKDPETLLPTNDFHRQFWLLFEYPESSSAARGVAVVSVLVVVISITIFCLETLPEFREDRELKVVRDPSINTNKTGLSQTMFTDPFFMVESTCIVWFTFELVLRFVVCPSKTDFFKNIMNIIDIISIIPYFATLITELVQETEPSAQQNMSLAILRIIRLVRVFRIFKLSRHSKGLQILGQTLKASMRELGLLIFFLFIGVILFSSAVYFAEVDEPESHFSSIPDGFWWAVVTMTTVGYGDMCPTTPGGKIVGTLCAIAGVLTIALPVPVIVSNFNYFYHRETENEEKPNIPGELDKILNSMGSRMGSTESLNKTNGSCSAEKSRK</sequence>
<accession>B2RQA1</accession>
<accession>B2RXZ4</accession>
<organism evidence="11">
    <name type="scientific">Mus musculus</name>
    <name type="common">Mouse</name>
    <dbReference type="NCBI Taxonomy" id="10090"/>
    <lineage>
        <taxon>Eukaryota</taxon>
        <taxon>Metazoa</taxon>
        <taxon>Chordata</taxon>
        <taxon>Craniata</taxon>
        <taxon>Vertebrata</taxon>
        <taxon>Euteleostomi</taxon>
        <taxon>Mammalia</taxon>
        <taxon>Eutheria</taxon>
        <taxon>Euarchontoglires</taxon>
        <taxon>Glires</taxon>
        <taxon>Rodentia</taxon>
        <taxon>Myomorpha</taxon>
        <taxon>Muroidea</taxon>
        <taxon>Muridae</taxon>
        <taxon>Murinae</taxon>
        <taxon>Mus</taxon>
        <taxon>Mus</taxon>
    </lineage>
</organism>
<keyword id="KW-0407">Ion channel</keyword>
<keyword id="KW-0406">Ion transport</keyword>
<keyword id="KW-0449">Lipoprotein</keyword>
<keyword id="KW-0472">Membrane</keyword>
<keyword id="KW-0564">Palmitate</keyword>
<keyword id="KW-0630">Potassium</keyword>
<keyword id="KW-0631">Potassium channel</keyword>
<keyword id="KW-0633">Potassium transport</keyword>
<keyword id="KW-1185">Reference proteome</keyword>
<keyword id="KW-0812">Transmembrane</keyword>
<keyword id="KW-1133">Transmembrane helix</keyword>
<keyword id="KW-0813">Transport</keyword>
<keyword id="KW-0851">Voltage-gated channel</keyword>
<name>KCA10_MOUSE</name>
<feature type="chain" id="PRO_0000437460" description="Potassium voltage-gated channel subfamily A member 10">
    <location>
        <begin position="1"/>
        <end position="511"/>
    </location>
</feature>
<feature type="transmembrane region" description="Helical; Name=Segment S1" evidence="4">
    <location>
        <begin position="218"/>
        <end position="238"/>
    </location>
</feature>
<feature type="transmembrane region" description="Helical; Name=Segment S2" evidence="4">
    <location>
        <begin position="271"/>
        <end position="292"/>
    </location>
</feature>
<feature type="transmembrane region" description="Helical; Name=Segment S3" evidence="4">
    <location>
        <begin position="303"/>
        <end position="323"/>
    </location>
</feature>
<feature type="transmembrane region" description="Helical; Voltage-sensor; Name=Segment S4" evidence="4">
    <location>
        <begin position="339"/>
        <end position="358"/>
    </location>
</feature>
<feature type="transmembrane region" description="Helical; Name=Segment S5" evidence="4">
    <location>
        <begin position="375"/>
        <end position="395"/>
    </location>
</feature>
<feature type="transmembrane region" description="Helical; Name=Segment S6" evidence="4">
    <location>
        <begin position="436"/>
        <end position="456"/>
    </location>
</feature>
<feature type="region of interest" description="Disordered" evidence="5">
    <location>
        <begin position="25"/>
        <end position="44"/>
    </location>
</feature>
<feature type="region of interest" description="Disordered" evidence="5">
    <location>
        <begin position="489"/>
        <end position="511"/>
    </location>
</feature>
<feature type="short sequence motif" description="Selectivity filter" evidence="1">
    <location>
        <begin position="421"/>
        <end position="426"/>
    </location>
</feature>
<feature type="lipid moiety-binding region" description="S-palmitoyl cysteine" evidence="2">
    <location>
        <position position="293"/>
    </location>
</feature>
<feature type="sequence conflict" description="In Ref. 2; AAI58037." evidence="8" ref="2">
    <original>V</original>
    <variation>A</variation>
    <location>
        <position position="250"/>
    </location>
</feature>
<feature type="sequence conflict" description="In Ref. 2; AAI58037." evidence="8" ref="2">
    <original>E</original>
    <variation>S</variation>
    <location>
        <position position="479"/>
    </location>
</feature>
<comment type="function">
    <text evidence="3">Voltage-gated potassium ion channel that mediates K(+) permeability of excitable membranes. When opened in response to the voltage difference across the membrane, KCNA10 channel selectively allows the flow of potassium ions across the membrane down their electrochemical gradient.</text>
</comment>
<comment type="catalytic activity">
    <reaction evidence="3">
        <text>K(+)(in) = K(+)(out)</text>
        <dbReference type="Rhea" id="RHEA:29463"/>
        <dbReference type="ChEBI" id="CHEBI:29103"/>
    </reaction>
</comment>
<comment type="activity regulation">
    <text evidence="3">The channel activity is up-regulated by cAMP.</text>
</comment>
<comment type="subunit">
    <text evidence="3">Homotetramer. Interacts with KCN4B/POMP. Interaction with KCN4B/POMP is necessary for the modulation of channel activity by cAMP.</text>
</comment>
<comment type="subcellular location">
    <subcellularLocation>
        <location evidence="4">Membrane</location>
        <topology evidence="4">Multi-pass membrane protein</topology>
    </subcellularLocation>
</comment>
<comment type="tissue specificity">
    <text evidence="7">Expressed strongly in the inner ear and weakly in skeletal muscle. Not detected in other tissues.</text>
</comment>
<comment type="developmental stage">
    <text evidence="6 7">Detected in the cochlear duct from 14.5 dpc (PubMed:22446089). Detected in the organ of Corti and the vestibular system from 16.5 dpc onwards, where it is most strongly expressed in hair cells (PubMed:22446089, PubMed:23528307).</text>
</comment>
<comment type="domain">
    <text evidence="3">The N-terminus may be important in determining the rate of inactivation of the channel while the tail may play a role in modulation of channel activity and/or targeting of the channel to specific subcellular compartments.</text>
</comment>
<comment type="domain">
    <text evidence="1">The segment S4 is probably the voltage-sensor and is characterized by a series of positively charged amino acids at every third position.</text>
</comment>
<comment type="disruption phenotype">
    <text evidence="7">Viable with no gross defects. Vestibular evoked potentials (VsEPs) are highly abnormal suggesting impaired function of the balance organ, although mice do not display any obvious imbalance behaviors.</text>
</comment>
<comment type="similarity">
    <text evidence="8">Belongs to the potassium channel family. A (Shaker) (TC 1.A.1.2) subfamily. Kv1.8/KCNA10 sub-subfamily.</text>
</comment>